<sequence>MQVLVRDNNVDQALRALKKKMQREGIFREMKMRGHYEKPSEKRAREKAEAVRRARKLARKRAQREGLLPMTPRPVAAGGAAGAARPPR</sequence>
<accession>Q98GY4</accession>
<feature type="chain" id="PRO_0000178364" description="Small ribosomal subunit protein bS21">
    <location>
        <begin position="1"/>
        <end position="88"/>
    </location>
</feature>
<feature type="region of interest" description="Disordered" evidence="2">
    <location>
        <begin position="58"/>
        <end position="88"/>
    </location>
</feature>
<feature type="compositionally biased region" description="Low complexity" evidence="2">
    <location>
        <begin position="73"/>
        <end position="88"/>
    </location>
</feature>
<evidence type="ECO:0000255" key="1">
    <source>
        <dbReference type="HAMAP-Rule" id="MF_00358"/>
    </source>
</evidence>
<evidence type="ECO:0000256" key="2">
    <source>
        <dbReference type="SAM" id="MobiDB-lite"/>
    </source>
</evidence>
<evidence type="ECO:0000305" key="3"/>
<comment type="similarity">
    <text evidence="1">Belongs to the bacterial ribosomal protein bS21 family.</text>
</comment>
<proteinExistence type="inferred from homology"/>
<protein>
    <recommendedName>
        <fullName evidence="1">Small ribosomal subunit protein bS21</fullName>
    </recommendedName>
    <alternativeName>
        <fullName evidence="3">30S ribosomal protein S21</fullName>
    </alternativeName>
</protein>
<keyword id="KW-0687">Ribonucleoprotein</keyword>
<keyword id="KW-0689">Ribosomal protein</keyword>
<name>RS21_RHILO</name>
<dbReference type="EMBL" id="BA000012">
    <property type="protein sequence ID" value="BAB50082.1"/>
    <property type="molecule type" value="Genomic_DNA"/>
</dbReference>
<dbReference type="RefSeq" id="WP_010911429.1">
    <property type="nucleotide sequence ID" value="NC_002678.2"/>
</dbReference>
<dbReference type="SMR" id="Q98GY4"/>
<dbReference type="GeneID" id="90989358"/>
<dbReference type="KEGG" id="mlo:msr3117"/>
<dbReference type="eggNOG" id="COG0828">
    <property type="taxonomic scope" value="Bacteria"/>
</dbReference>
<dbReference type="HOGENOM" id="CLU_159258_0_1_5"/>
<dbReference type="Proteomes" id="UP000000552">
    <property type="component" value="Chromosome"/>
</dbReference>
<dbReference type="GO" id="GO:1990904">
    <property type="term" value="C:ribonucleoprotein complex"/>
    <property type="evidence" value="ECO:0007669"/>
    <property type="project" value="UniProtKB-KW"/>
</dbReference>
<dbReference type="GO" id="GO:0005840">
    <property type="term" value="C:ribosome"/>
    <property type="evidence" value="ECO:0007669"/>
    <property type="project" value="UniProtKB-KW"/>
</dbReference>
<dbReference type="GO" id="GO:0003735">
    <property type="term" value="F:structural constituent of ribosome"/>
    <property type="evidence" value="ECO:0007669"/>
    <property type="project" value="InterPro"/>
</dbReference>
<dbReference type="GO" id="GO:0006412">
    <property type="term" value="P:translation"/>
    <property type="evidence" value="ECO:0007669"/>
    <property type="project" value="UniProtKB-UniRule"/>
</dbReference>
<dbReference type="Gene3D" id="1.20.5.1150">
    <property type="entry name" value="Ribosomal protein S8"/>
    <property type="match status" value="1"/>
</dbReference>
<dbReference type="HAMAP" id="MF_00358">
    <property type="entry name" value="Ribosomal_bS21"/>
    <property type="match status" value="1"/>
</dbReference>
<dbReference type="InterPro" id="IPR001911">
    <property type="entry name" value="Ribosomal_bS21"/>
</dbReference>
<dbReference type="InterPro" id="IPR018278">
    <property type="entry name" value="Ribosomal_bS21_CS"/>
</dbReference>
<dbReference type="InterPro" id="IPR038380">
    <property type="entry name" value="Ribosomal_bS21_sf"/>
</dbReference>
<dbReference type="NCBIfam" id="TIGR00030">
    <property type="entry name" value="S21p"/>
    <property type="match status" value="1"/>
</dbReference>
<dbReference type="PANTHER" id="PTHR21109">
    <property type="entry name" value="MITOCHONDRIAL 28S RIBOSOMAL PROTEIN S21"/>
    <property type="match status" value="1"/>
</dbReference>
<dbReference type="PANTHER" id="PTHR21109:SF0">
    <property type="entry name" value="SMALL RIBOSOMAL SUBUNIT PROTEIN BS21M"/>
    <property type="match status" value="1"/>
</dbReference>
<dbReference type="Pfam" id="PF01165">
    <property type="entry name" value="Ribosomal_S21"/>
    <property type="match status" value="1"/>
</dbReference>
<dbReference type="PRINTS" id="PR00976">
    <property type="entry name" value="RIBOSOMALS21"/>
</dbReference>
<dbReference type="PROSITE" id="PS01181">
    <property type="entry name" value="RIBOSOMAL_S21"/>
    <property type="match status" value="1"/>
</dbReference>
<gene>
    <name evidence="1" type="primary">rpsU</name>
    <name type="ordered locus">msr3117</name>
</gene>
<organism>
    <name type="scientific">Mesorhizobium japonicum (strain LMG 29417 / CECT 9101 / MAFF 303099)</name>
    <name type="common">Mesorhizobium loti (strain MAFF 303099)</name>
    <dbReference type="NCBI Taxonomy" id="266835"/>
    <lineage>
        <taxon>Bacteria</taxon>
        <taxon>Pseudomonadati</taxon>
        <taxon>Pseudomonadota</taxon>
        <taxon>Alphaproteobacteria</taxon>
        <taxon>Hyphomicrobiales</taxon>
        <taxon>Phyllobacteriaceae</taxon>
        <taxon>Mesorhizobium</taxon>
    </lineage>
</organism>
<reference key="1">
    <citation type="journal article" date="2000" name="DNA Res.">
        <title>Complete genome structure of the nitrogen-fixing symbiotic bacterium Mesorhizobium loti.</title>
        <authorList>
            <person name="Kaneko T."/>
            <person name="Nakamura Y."/>
            <person name="Sato S."/>
            <person name="Asamizu E."/>
            <person name="Kato T."/>
            <person name="Sasamoto S."/>
            <person name="Watanabe A."/>
            <person name="Idesawa K."/>
            <person name="Ishikawa A."/>
            <person name="Kawashima K."/>
            <person name="Kimura T."/>
            <person name="Kishida Y."/>
            <person name="Kiyokawa C."/>
            <person name="Kohara M."/>
            <person name="Matsumoto M."/>
            <person name="Matsuno A."/>
            <person name="Mochizuki Y."/>
            <person name="Nakayama S."/>
            <person name="Nakazaki N."/>
            <person name="Shimpo S."/>
            <person name="Sugimoto M."/>
            <person name="Takeuchi C."/>
            <person name="Yamada M."/>
            <person name="Tabata S."/>
        </authorList>
    </citation>
    <scope>NUCLEOTIDE SEQUENCE [LARGE SCALE GENOMIC DNA]</scope>
    <source>
        <strain>LMG 29417 / CECT 9101 / MAFF 303099</strain>
    </source>
</reference>